<protein>
    <recommendedName>
        <fullName evidence="1">Indole-3-glycerol phosphate synthase</fullName>
        <shortName evidence="1">IGPS</shortName>
        <ecNumber evidence="1">4.1.1.48</ecNumber>
    </recommendedName>
</protein>
<accession>A1R5S7</accession>
<reference key="1">
    <citation type="journal article" date="2006" name="PLoS Genet.">
        <title>Secrets of soil survival revealed by the genome sequence of Arthrobacter aurescens TC1.</title>
        <authorList>
            <person name="Mongodin E.F."/>
            <person name="Shapir N."/>
            <person name="Daugherty S.C."/>
            <person name="DeBoy R.T."/>
            <person name="Emerson J.B."/>
            <person name="Shvartzbeyn A."/>
            <person name="Radune D."/>
            <person name="Vamathevan J."/>
            <person name="Riggs F."/>
            <person name="Grinberg V."/>
            <person name="Khouri H.M."/>
            <person name="Wackett L.P."/>
            <person name="Nelson K.E."/>
            <person name="Sadowsky M.J."/>
        </authorList>
    </citation>
    <scope>NUCLEOTIDE SEQUENCE [LARGE SCALE GENOMIC DNA]</scope>
    <source>
        <strain>TC1</strain>
    </source>
</reference>
<dbReference type="EC" id="4.1.1.48" evidence="1"/>
<dbReference type="EMBL" id="CP000474">
    <property type="protein sequence ID" value="ABM09959.1"/>
    <property type="molecule type" value="Genomic_DNA"/>
</dbReference>
<dbReference type="SMR" id="A1R5S7"/>
<dbReference type="STRING" id="290340.AAur_1838"/>
<dbReference type="KEGG" id="aau:AAur_1838"/>
<dbReference type="eggNOG" id="COG0134">
    <property type="taxonomic scope" value="Bacteria"/>
</dbReference>
<dbReference type="HOGENOM" id="CLU_034247_2_0_11"/>
<dbReference type="UniPathway" id="UPA00035">
    <property type="reaction ID" value="UER00043"/>
</dbReference>
<dbReference type="Proteomes" id="UP000000637">
    <property type="component" value="Chromosome"/>
</dbReference>
<dbReference type="GO" id="GO:0004425">
    <property type="term" value="F:indole-3-glycerol-phosphate synthase activity"/>
    <property type="evidence" value="ECO:0007669"/>
    <property type="project" value="UniProtKB-UniRule"/>
</dbReference>
<dbReference type="GO" id="GO:0004640">
    <property type="term" value="F:phosphoribosylanthranilate isomerase activity"/>
    <property type="evidence" value="ECO:0007669"/>
    <property type="project" value="TreeGrafter"/>
</dbReference>
<dbReference type="GO" id="GO:0000162">
    <property type="term" value="P:L-tryptophan biosynthetic process"/>
    <property type="evidence" value="ECO:0007669"/>
    <property type="project" value="UniProtKB-UniRule"/>
</dbReference>
<dbReference type="CDD" id="cd00331">
    <property type="entry name" value="IGPS"/>
    <property type="match status" value="1"/>
</dbReference>
<dbReference type="FunFam" id="3.20.20.70:FF:000024">
    <property type="entry name" value="Indole-3-glycerol phosphate synthase"/>
    <property type="match status" value="1"/>
</dbReference>
<dbReference type="Gene3D" id="3.20.20.70">
    <property type="entry name" value="Aldolase class I"/>
    <property type="match status" value="1"/>
</dbReference>
<dbReference type="HAMAP" id="MF_00134_B">
    <property type="entry name" value="IGPS_B"/>
    <property type="match status" value="1"/>
</dbReference>
<dbReference type="InterPro" id="IPR013785">
    <property type="entry name" value="Aldolase_TIM"/>
</dbReference>
<dbReference type="InterPro" id="IPR045186">
    <property type="entry name" value="Indole-3-glycerol_P_synth"/>
</dbReference>
<dbReference type="InterPro" id="IPR013798">
    <property type="entry name" value="Indole-3-glycerol_P_synth_dom"/>
</dbReference>
<dbReference type="InterPro" id="IPR001468">
    <property type="entry name" value="Indole-3-GlycerolPSynthase_CS"/>
</dbReference>
<dbReference type="InterPro" id="IPR011060">
    <property type="entry name" value="RibuloseP-bd_barrel"/>
</dbReference>
<dbReference type="NCBIfam" id="NF001369">
    <property type="entry name" value="PRK00278.1-1"/>
    <property type="match status" value="1"/>
</dbReference>
<dbReference type="NCBIfam" id="NF001377">
    <property type="entry name" value="PRK00278.2-4"/>
    <property type="match status" value="1"/>
</dbReference>
<dbReference type="PANTHER" id="PTHR22854:SF2">
    <property type="entry name" value="INDOLE-3-GLYCEROL-PHOSPHATE SYNTHASE"/>
    <property type="match status" value="1"/>
</dbReference>
<dbReference type="PANTHER" id="PTHR22854">
    <property type="entry name" value="TRYPTOPHAN BIOSYNTHESIS PROTEIN"/>
    <property type="match status" value="1"/>
</dbReference>
<dbReference type="Pfam" id="PF00218">
    <property type="entry name" value="IGPS"/>
    <property type="match status" value="1"/>
</dbReference>
<dbReference type="SUPFAM" id="SSF51366">
    <property type="entry name" value="Ribulose-phoshate binding barrel"/>
    <property type="match status" value="1"/>
</dbReference>
<dbReference type="PROSITE" id="PS00614">
    <property type="entry name" value="IGPS"/>
    <property type="match status" value="1"/>
</dbReference>
<sequence>MTVLDDIIVGVKEDMEVRRGLVSLAELKERAANAAPARDAWAALGGPSSIRNDLKVIAEIKRRSPSKGDLASIADPASLAVQYADGGASVISVLTEQRRFGGSLADFDAVRAAVETPLLRKDFTVDEYQIWEARAHGADLILLIVAALSDAELADFSALSHELGMNVLVETHTEEEIERAVAAQAKIIGINVRNLKTLDVDRSVFGSLAGLIPAESVIVAESGVRGPEDVSHYAAGGANAILVGEALVSDSTPRERITEFKAAGAAAIAVRN</sequence>
<feature type="chain" id="PRO_1000018431" description="Indole-3-glycerol phosphate synthase">
    <location>
        <begin position="1"/>
        <end position="272"/>
    </location>
</feature>
<keyword id="KW-0028">Amino-acid biosynthesis</keyword>
<keyword id="KW-0057">Aromatic amino acid biosynthesis</keyword>
<keyword id="KW-0210">Decarboxylase</keyword>
<keyword id="KW-0456">Lyase</keyword>
<keyword id="KW-0822">Tryptophan biosynthesis</keyword>
<organism>
    <name type="scientific">Paenarthrobacter aurescens (strain TC1)</name>
    <dbReference type="NCBI Taxonomy" id="290340"/>
    <lineage>
        <taxon>Bacteria</taxon>
        <taxon>Bacillati</taxon>
        <taxon>Actinomycetota</taxon>
        <taxon>Actinomycetes</taxon>
        <taxon>Micrococcales</taxon>
        <taxon>Micrococcaceae</taxon>
        <taxon>Paenarthrobacter</taxon>
    </lineage>
</organism>
<evidence type="ECO:0000255" key="1">
    <source>
        <dbReference type="HAMAP-Rule" id="MF_00134"/>
    </source>
</evidence>
<comment type="catalytic activity">
    <reaction evidence="1">
        <text>1-(2-carboxyphenylamino)-1-deoxy-D-ribulose 5-phosphate + H(+) = (1S,2R)-1-C-(indol-3-yl)glycerol 3-phosphate + CO2 + H2O</text>
        <dbReference type="Rhea" id="RHEA:23476"/>
        <dbReference type="ChEBI" id="CHEBI:15377"/>
        <dbReference type="ChEBI" id="CHEBI:15378"/>
        <dbReference type="ChEBI" id="CHEBI:16526"/>
        <dbReference type="ChEBI" id="CHEBI:58613"/>
        <dbReference type="ChEBI" id="CHEBI:58866"/>
        <dbReference type="EC" id="4.1.1.48"/>
    </reaction>
</comment>
<comment type="pathway">
    <text evidence="1">Amino-acid biosynthesis; L-tryptophan biosynthesis; L-tryptophan from chorismate: step 4/5.</text>
</comment>
<comment type="similarity">
    <text evidence="1">Belongs to the TrpC family.</text>
</comment>
<proteinExistence type="inferred from homology"/>
<name>TRPC_PAEAT</name>
<gene>
    <name evidence="1" type="primary">trpC</name>
    <name type="ordered locus">AAur_1838</name>
</gene>